<organism>
    <name type="scientific">Murine adenovirus A serotype 1</name>
    <name type="common">MAdV-1</name>
    <name type="synonym">Murine adenovirus 1</name>
    <dbReference type="NCBI Taxonomy" id="10530"/>
    <lineage>
        <taxon>Viruses</taxon>
        <taxon>Varidnaviria</taxon>
        <taxon>Bamfordvirae</taxon>
        <taxon>Preplasmiviricota</taxon>
        <taxon>Tectiliviricetes</taxon>
        <taxon>Rowavirales</taxon>
        <taxon>Adenoviridae</taxon>
        <taxon>Mastadenovirus</taxon>
        <taxon>Murine mastadenovirus A</taxon>
    </lineage>
</organism>
<sequence length="96" mass="11133">MNSRMRRWAATSRLLHEDPPATPPSQDQQAEVLRRDIHILNAKISELENQMERLCRSLESTFNRIELLHSMLAQGEEEEEEEDGAEDIEENGEESD</sequence>
<proteinExistence type="predicted"/>
<dbReference type="EMBL" id="M22245">
    <property type="protein sequence ID" value="AAA42430.1"/>
    <property type="molecule type" value="Genomic_DNA"/>
</dbReference>
<dbReference type="SMR" id="P12533"/>
<dbReference type="IntAct" id="P12533">
    <property type="interactions" value="1"/>
</dbReference>
<dbReference type="MINT" id="P12533"/>
<dbReference type="KEGG" id="vg:1460934"/>
<protein>
    <recommendedName>
        <fullName>Early E1A 11 kDa protein</fullName>
    </recommendedName>
</protein>
<name>E111_ADEM1</name>
<reference key="1">
    <citation type="journal article" date="1989" name="Virology">
        <title>Genome organization of mouse adenovirus type 1 early region 1: a novel transcription map.</title>
        <authorList>
            <person name="Ball A.O."/>
            <person name="Beard C.W."/>
            <person name="Redick S.D."/>
            <person name="Spindler K.R."/>
        </authorList>
    </citation>
    <scope>NUCLEOTIDE SEQUENCE [GENOMIC DNA]</scope>
</reference>
<reference key="2">
    <citation type="journal article" date="1988" name="J. Virol.">
        <title>Identification of mouse adenovirus type 1 early region 1: DNA sequence and a conserved transactivating function.</title>
        <authorList>
            <person name="Ball A.O."/>
            <person name="Williams M.E."/>
            <person name="Spindler K.R."/>
        </authorList>
    </citation>
    <scope>NUCLEOTIDE SEQUENCE [GENOMIC DNA] OF 1-66</scope>
</reference>
<feature type="chain" id="PRO_0000221691" description="Early E1A 11 kDa protein">
    <location>
        <begin position="1"/>
        <end position="96"/>
    </location>
</feature>
<feature type="region of interest" description="Disordered" evidence="1">
    <location>
        <begin position="1"/>
        <end position="29"/>
    </location>
</feature>
<feature type="region of interest" description="Disordered" evidence="1">
    <location>
        <begin position="72"/>
        <end position="96"/>
    </location>
</feature>
<feature type="compositionally biased region" description="Acidic residues" evidence="1">
    <location>
        <begin position="75"/>
        <end position="96"/>
    </location>
</feature>
<accession>P12533</accession>
<organismHost>
    <name type="scientific">Mus musculus</name>
    <name type="common">Mouse</name>
    <dbReference type="NCBI Taxonomy" id="10090"/>
</organismHost>
<evidence type="ECO:0000256" key="1">
    <source>
        <dbReference type="SAM" id="MobiDB-lite"/>
    </source>
</evidence>
<keyword id="KW-0244">Early protein</keyword>